<reference key="1">
    <citation type="journal article" date="1993" name="Genomics">
        <title>Molecular characterization and evolution of the SPRR family of keratinocyte differentiation markers encoding small proline-rich proteins.</title>
        <authorList>
            <person name="Gibbs S."/>
            <person name="Fijneman R."/>
            <person name="Wiegant J."/>
            <person name="Geurts van Kessel A."/>
            <person name="van de Putte P."/>
            <person name="Backendorf C."/>
        </authorList>
    </citation>
    <scope>NUCLEOTIDE SEQUENCE [GENOMIC DNA]</scope>
    <source>
        <tissue>Skin</tissue>
    </source>
</reference>
<reference key="2">
    <citation type="journal article" date="2001" name="J. Biol. Chem.">
        <title>Structural organization and regulation of the small proline-rich family of cornified envelope precursors suggest a role in adaptive barrier function.</title>
        <authorList>
            <person name="Cabral A."/>
            <person name="Voskamp P."/>
            <person name="Cleton-Jansen A.-M."/>
            <person name="South A."/>
            <person name="Nizetic D."/>
            <person name="Backendorf C."/>
        </authorList>
    </citation>
    <scope>NUCLEOTIDE SEQUENCE [GENOMIC DNA]</scope>
</reference>
<reference key="3">
    <citation type="journal article" date="2006" name="Nature">
        <title>The DNA sequence and biological annotation of human chromosome 1.</title>
        <authorList>
            <person name="Gregory S.G."/>
            <person name="Barlow K.F."/>
            <person name="McLay K.E."/>
            <person name="Kaul R."/>
            <person name="Swarbreck D."/>
            <person name="Dunham A."/>
            <person name="Scott C.E."/>
            <person name="Howe K.L."/>
            <person name="Woodfine K."/>
            <person name="Spencer C.C.A."/>
            <person name="Jones M.C."/>
            <person name="Gillson C."/>
            <person name="Searle S."/>
            <person name="Zhou Y."/>
            <person name="Kokocinski F."/>
            <person name="McDonald L."/>
            <person name="Evans R."/>
            <person name="Phillips K."/>
            <person name="Atkinson A."/>
            <person name="Cooper R."/>
            <person name="Jones C."/>
            <person name="Hall R.E."/>
            <person name="Andrews T.D."/>
            <person name="Lloyd C."/>
            <person name="Ainscough R."/>
            <person name="Almeida J.P."/>
            <person name="Ambrose K.D."/>
            <person name="Anderson F."/>
            <person name="Andrew R.W."/>
            <person name="Ashwell R.I.S."/>
            <person name="Aubin K."/>
            <person name="Babbage A.K."/>
            <person name="Bagguley C.L."/>
            <person name="Bailey J."/>
            <person name="Beasley H."/>
            <person name="Bethel G."/>
            <person name="Bird C.P."/>
            <person name="Bray-Allen S."/>
            <person name="Brown J.Y."/>
            <person name="Brown A.J."/>
            <person name="Buckley D."/>
            <person name="Burton J."/>
            <person name="Bye J."/>
            <person name="Carder C."/>
            <person name="Chapman J.C."/>
            <person name="Clark S.Y."/>
            <person name="Clarke G."/>
            <person name="Clee C."/>
            <person name="Cobley V."/>
            <person name="Collier R.E."/>
            <person name="Corby N."/>
            <person name="Coville G.J."/>
            <person name="Davies J."/>
            <person name="Deadman R."/>
            <person name="Dunn M."/>
            <person name="Earthrowl M."/>
            <person name="Ellington A.G."/>
            <person name="Errington H."/>
            <person name="Frankish A."/>
            <person name="Frankland J."/>
            <person name="French L."/>
            <person name="Garner P."/>
            <person name="Garnett J."/>
            <person name="Gay L."/>
            <person name="Ghori M.R.J."/>
            <person name="Gibson R."/>
            <person name="Gilby L.M."/>
            <person name="Gillett W."/>
            <person name="Glithero R.J."/>
            <person name="Grafham D.V."/>
            <person name="Griffiths C."/>
            <person name="Griffiths-Jones S."/>
            <person name="Grocock R."/>
            <person name="Hammond S."/>
            <person name="Harrison E.S.I."/>
            <person name="Hart E."/>
            <person name="Haugen E."/>
            <person name="Heath P.D."/>
            <person name="Holmes S."/>
            <person name="Holt K."/>
            <person name="Howden P.J."/>
            <person name="Hunt A.R."/>
            <person name="Hunt S.E."/>
            <person name="Hunter G."/>
            <person name="Isherwood J."/>
            <person name="James R."/>
            <person name="Johnson C."/>
            <person name="Johnson D."/>
            <person name="Joy A."/>
            <person name="Kay M."/>
            <person name="Kershaw J.K."/>
            <person name="Kibukawa M."/>
            <person name="Kimberley A.M."/>
            <person name="King A."/>
            <person name="Knights A.J."/>
            <person name="Lad H."/>
            <person name="Laird G."/>
            <person name="Lawlor S."/>
            <person name="Leongamornlert D.A."/>
            <person name="Lloyd D.M."/>
            <person name="Loveland J."/>
            <person name="Lovell J."/>
            <person name="Lush M.J."/>
            <person name="Lyne R."/>
            <person name="Martin S."/>
            <person name="Mashreghi-Mohammadi M."/>
            <person name="Matthews L."/>
            <person name="Matthews N.S.W."/>
            <person name="McLaren S."/>
            <person name="Milne S."/>
            <person name="Mistry S."/>
            <person name="Moore M.J.F."/>
            <person name="Nickerson T."/>
            <person name="O'Dell C.N."/>
            <person name="Oliver K."/>
            <person name="Palmeiri A."/>
            <person name="Palmer S.A."/>
            <person name="Parker A."/>
            <person name="Patel D."/>
            <person name="Pearce A.V."/>
            <person name="Peck A.I."/>
            <person name="Pelan S."/>
            <person name="Phelps K."/>
            <person name="Phillimore B.J."/>
            <person name="Plumb R."/>
            <person name="Rajan J."/>
            <person name="Raymond C."/>
            <person name="Rouse G."/>
            <person name="Saenphimmachak C."/>
            <person name="Sehra H.K."/>
            <person name="Sheridan E."/>
            <person name="Shownkeen R."/>
            <person name="Sims S."/>
            <person name="Skuce C.D."/>
            <person name="Smith M."/>
            <person name="Steward C."/>
            <person name="Subramanian S."/>
            <person name="Sycamore N."/>
            <person name="Tracey A."/>
            <person name="Tromans A."/>
            <person name="Van Helmond Z."/>
            <person name="Wall M."/>
            <person name="Wallis J.M."/>
            <person name="White S."/>
            <person name="Whitehead S.L."/>
            <person name="Wilkinson J.E."/>
            <person name="Willey D.L."/>
            <person name="Williams H."/>
            <person name="Wilming L."/>
            <person name="Wray P.W."/>
            <person name="Wu Z."/>
            <person name="Coulson A."/>
            <person name="Vaudin M."/>
            <person name="Sulston J.E."/>
            <person name="Durbin R.M."/>
            <person name="Hubbard T."/>
            <person name="Wooster R."/>
            <person name="Dunham I."/>
            <person name="Carter N.P."/>
            <person name="McVean G."/>
            <person name="Ross M.T."/>
            <person name="Harrow J."/>
            <person name="Olson M.V."/>
            <person name="Beck S."/>
            <person name="Rogers J."/>
            <person name="Bentley D.R."/>
        </authorList>
    </citation>
    <scope>NUCLEOTIDE SEQUENCE [LARGE SCALE GENOMIC DNA]</scope>
</reference>
<comment type="function">
    <text>Cross-linked envelope protein of keratinocytes. It is a keratinocyte protein that first appears in the cell cytosol, but ultimately becomes cross-linked to membrane proteins by transglutaminase. All that results in the formation of an insoluble envelope beneath the plasma membrane.</text>
</comment>
<comment type="subcellular location">
    <subcellularLocation>
        <location>Cytoplasm</location>
    </subcellularLocation>
</comment>
<comment type="tissue specificity">
    <text>Suprabasal layers of squamous-differentiated tissues such as epidermis, esophagus, tongue and trachea.</text>
</comment>
<comment type="developmental stage">
    <text>Expressed during differentiation of squamous cells.</text>
</comment>
<comment type="induction">
    <text>By UV irradiation and carcinogenic agents. During squamous differentiation of epidermal keratinocytes.</text>
</comment>
<comment type="similarity">
    <text evidence="2">Belongs to the cornifin (SPRR) family.</text>
</comment>
<keyword id="KW-0963">Cytoplasm</keyword>
<keyword id="KW-0417">Keratinization</keyword>
<keyword id="KW-1185">Reference proteome</keyword>
<keyword id="KW-0677">Repeat</keyword>
<proteinExistence type="evidence at transcript level"/>
<gene>
    <name type="primary">SPRR2B</name>
</gene>
<feature type="chain" id="PRO_0000150009" description="Small proline-rich protein 2B">
    <location>
        <begin position="1"/>
        <end position="72"/>
    </location>
</feature>
<feature type="repeat" description="1">
    <location>
        <begin position="21"/>
        <end position="29"/>
    </location>
</feature>
<feature type="repeat" description="2">
    <location>
        <begin position="30"/>
        <end position="38"/>
    </location>
</feature>
<feature type="repeat" description="3">
    <location>
        <begin position="39"/>
        <end position="47"/>
    </location>
</feature>
<feature type="region of interest" description="Disordered" evidence="1">
    <location>
        <begin position="1"/>
        <end position="20"/>
    </location>
</feature>
<feature type="region of interest" description="3 X 9 AA tandem repeats of P-K-C-P-[EQ]-P-C-P-P">
    <location>
        <begin position="21"/>
        <end position="47"/>
    </location>
</feature>
<feature type="region of interest" description="Disordered" evidence="1">
    <location>
        <begin position="42"/>
        <end position="72"/>
    </location>
</feature>
<feature type="compositionally biased region" description="Low complexity" evidence="1">
    <location>
        <begin position="1"/>
        <end position="11"/>
    </location>
</feature>
<feature type="compositionally biased region" description="Pro residues" evidence="1">
    <location>
        <begin position="56"/>
        <end position="72"/>
    </location>
</feature>
<feature type="sequence variant" id="VAR_034518" description="In dbSNP:rs1404957316.">
    <original>P</original>
    <variation>S</variation>
    <location>
        <position position="39"/>
    </location>
</feature>
<accession>P35325</accession>
<accession>Q5T528</accession>
<dbReference type="EMBL" id="L05188">
    <property type="protein sequence ID" value="AAA60576.1"/>
    <property type="molecule type" value="Genomic_DNA"/>
</dbReference>
<dbReference type="EMBL" id="AF333952">
    <property type="protein sequence ID" value="AAK70940.1"/>
    <property type="molecule type" value="Genomic_DNA"/>
</dbReference>
<dbReference type="EMBL" id="AL356867">
    <property type="status" value="NOT_ANNOTATED_CDS"/>
    <property type="molecule type" value="Genomic_DNA"/>
</dbReference>
<dbReference type="CCDS" id="CCDS30865.1"/>
<dbReference type="PIR" id="I68511">
    <property type="entry name" value="I68511"/>
</dbReference>
<dbReference type="RefSeq" id="NP_001017418.1">
    <property type="nucleotide sequence ID" value="NM_001017418.3"/>
</dbReference>
<dbReference type="RefSeq" id="NP_001375127.1">
    <property type="nucleotide sequence ID" value="NM_001388198.1"/>
</dbReference>
<dbReference type="RefSeq" id="XP_016857663.1">
    <property type="nucleotide sequence ID" value="XM_017002174.1"/>
</dbReference>
<dbReference type="RefSeq" id="XP_047284822.1">
    <property type="nucleotide sequence ID" value="XM_047428866.1"/>
</dbReference>
<dbReference type="BioGRID" id="112579">
    <property type="interactions" value="7"/>
</dbReference>
<dbReference type="FunCoup" id="P35325">
    <property type="interactions" value="89"/>
</dbReference>
<dbReference type="IntAct" id="P35325">
    <property type="interactions" value="4"/>
</dbReference>
<dbReference type="GlyGen" id="P35325">
    <property type="glycosylation" value="2 sites"/>
</dbReference>
<dbReference type="iPTMnet" id="P35325"/>
<dbReference type="PhosphoSitePlus" id="P35325"/>
<dbReference type="BioMuta" id="SPRR2B"/>
<dbReference type="jPOST" id="P35325"/>
<dbReference type="MassIVE" id="P35325"/>
<dbReference type="PeptideAtlas" id="P35325"/>
<dbReference type="Pumba" id="P35325"/>
<dbReference type="DNASU" id="6701"/>
<dbReference type="Ensembl" id="ENST00000368755.3">
    <property type="protein sequence ID" value="ENSP00000357744.1"/>
    <property type="gene ID" value="ENSG00000196805.8"/>
</dbReference>
<dbReference type="GeneID" id="6701"/>
<dbReference type="KEGG" id="hsa:6701"/>
<dbReference type="MANE-Select" id="ENST00000368755.3">
    <property type="protein sequence ID" value="ENSP00000357744.1"/>
    <property type="RefSeq nucleotide sequence ID" value="NM_001388198.1"/>
    <property type="RefSeq protein sequence ID" value="NP_001375127.1"/>
</dbReference>
<dbReference type="UCSC" id="uc057lau.1">
    <property type="organism name" value="human"/>
</dbReference>
<dbReference type="AGR" id="HGNC:11262"/>
<dbReference type="CTD" id="6701"/>
<dbReference type="DisGeNET" id="6701"/>
<dbReference type="GeneCards" id="SPRR2B"/>
<dbReference type="HGNC" id="HGNC:11262">
    <property type="gene designation" value="SPRR2B"/>
</dbReference>
<dbReference type="HPA" id="ENSG00000196805">
    <property type="expression patterns" value="Tissue enhanced (esophagus, skin)"/>
</dbReference>
<dbReference type="MIM" id="182268">
    <property type="type" value="gene"/>
</dbReference>
<dbReference type="neXtProt" id="NX_P35325"/>
<dbReference type="OpenTargets" id="ENSG00000196805"/>
<dbReference type="PharmGKB" id="PA36091"/>
<dbReference type="VEuPathDB" id="HostDB:ENSG00000196805"/>
<dbReference type="eggNOG" id="ENOG502TEHF">
    <property type="taxonomic scope" value="Eukaryota"/>
</dbReference>
<dbReference type="GeneTree" id="ENSGT00940000163622"/>
<dbReference type="HOGENOM" id="CLU_192372_0_0_1"/>
<dbReference type="InParanoid" id="P35325"/>
<dbReference type="OMA" id="PSQQKCP"/>
<dbReference type="PAN-GO" id="P35325">
    <property type="GO annotations" value="0 GO annotations based on evolutionary models"/>
</dbReference>
<dbReference type="PathwayCommons" id="P35325"/>
<dbReference type="Reactome" id="R-HSA-6809371">
    <property type="pathway name" value="Formation of the cornified envelope"/>
</dbReference>
<dbReference type="SignaLink" id="P35325"/>
<dbReference type="BioGRID-ORCS" id="6701">
    <property type="hits" value="40 hits in 314 CRISPR screens"/>
</dbReference>
<dbReference type="GenomeRNAi" id="6701"/>
<dbReference type="Pharos" id="P35325">
    <property type="development level" value="Tdark"/>
</dbReference>
<dbReference type="PRO" id="PR:P35325"/>
<dbReference type="Proteomes" id="UP000005640">
    <property type="component" value="Chromosome 1"/>
</dbReference>
<dbReference type="RNAct" id="P35325">
    <property type="molecule type" value="protein"/>
</dbReference>
<dbReference type="Bgee" id="ENSG00000196805">
    <property type="expression patterns" value="Expressed in male germ line stem cell (sensu Vertebrata) in testis and 60 other cell types or tissues"/>
</dbReference>
<dbReference type="GO" id="GO:0001533">
    <property type="term" value="C:cornified envelope"/>
    <property type="evidence" value="ECO:0000304"/>
    <property type="project" value="Reactome"/>
</dbReference>
<dbReference type="GO" id="GO:0005829">
    <property type="term" value="C:cytosol"/>
    <property type="evidence" value="ECO:0000304"/>
    <property type="project" value="Reactome"/>
</dbReference>
<dbReference type="GO" id="GO:0008544">
    <property type="term" value="P:epidermis development"/>
    <property type="evidence" value="ECO:0000303"/>
    <property type="project" value="UniProtKB"/>
</dbReference>
<dbReference type="GO" id="GO:0031424">
    <property type="term" value="P:keratinization"/>
    <property type="evidence" value="ECO:0007669"/>
    <property type="project" value="UniProtKB-KW"/>
</dbReference>
<dbReference type="GO" id="GO:0030216">
    <property type="term" value="P:keratinocyte differentiation"/>
    <property type="evidence" value="ECO:0000303"/>
    <property type="project" value="UniProtKB"/>
</dbReference>
<dbReference type="InterPro" id="IPR029142">
    <property type="entry name" value="SPRR2"/>
</dbReference>
<dbReference type="Pfam" id="PF14820">
    <property type="entry name" value="SPRR2"/>
    <property type="match status" value="1"/>
</dbReference>
<dbReference type="PRINTS" id="PR01217">
    <property type="entry name" value="PRICHEXTENSN"/>
</dbReference>
<dbReference type="PRINTS" id="PR00021">
    <property type="entry name" value="PRORICH"/>
</dbReference>
<evidence type="ECO:0000256" key="1">
    <source>
        <dbReference type="SAM" id="MobiDB-lite"/>
    </source>
</evidence>
<evidence type="ECO:0000305" key="2"/>
<protein>
    <recommendedName>
        <fullName>Small proline-rich protein 2B</fullName>
        <shortName>SPR-2B</shortName>
    </recommendedName>
</protein>
<organism>
    <name type="scientific">Homo sapiens</name>
    <name type="common">Human</name>
    <dbReference type="NCBI Taxonomy" id="9606"/>
    <lineage>
        <taxon>Eukaryota</taxon>
        <taxon>Metazoa</taxon>
        <taxon>Chordata</taxon>
        <taxon>Craniata</taxon>
        <taxon>Vertebrata</taxon>
        <taxon>Euteleostomi</taxon>
        <taxon>Mammalia</taxon>
        <taxon>Eutheria</taxon>
        <taxon>Euarchontoglires</taxon>
        <taxon>Primates</taxon>
        <taxon>Haplorrhini</taxon>
        <taxon>Catarrhini</taxon>
        <taxon>Hominidae</taxon>
        <taxon>Homo</taxon>
    </lineage>
</organism>
<sequence length="72" mass="7975">MSYQQQQCKQPCQPPPVCPTPKCPEPCPPPKCPEPCPPPKCPQPCPPQQCQQKYPPVTPSPPCQPKYPPKSK</sequence>
<name>SPR2B_HUMAN</name>